<organism>
    <name type="scientific">Bacillus subtilis (strain 168)</name>
    <dbReference type="NCBI Taxonomy" id="224308"/>
    <lineage>
        <taxon>Bacteria</taxon>
        <taxon>Bacillati</taxon>
        <taxon>Bacillota</taxon>
        <taxon>Bacilli</taxon>
        <taxon>Bacillales</taxon>
        <taxon>Bacillaceae</taxon>
        <taxon>Bacillus</taxon>
    </lineage>
</organism>
<name>YTHQ_BACSU</name>
<comment type="subcellular location">
    <subcellularLocation>
        <location evidence="2">Cell membrane</location>
        <topology evidence="2">Multi-pass membrane protein</topology>
    </subcellularLocation>
</comment>
<sequence length="385" mass="45047">MNGRTLFFRRLFDYYKYQFKVLHAVIDWTVALYIVLPAIAFVIYQYIDLMNGRGLLYEWSEVAEWRWLYAVCVLIMFTGSIRTFLMEADKVFLLQKKEIIYQLKRYALLYSFLATLAKWLLLFFIVLPLISHSVLITFAESTALLCYLFGLHIFFLSLKQDRIRKPRSISRWIGDTLVRAILFAGSAILIVFTERHLLALFGILFLFFSVIRSLKKTASFTAFEAEVTEEKKSRLALAGLVMMMSQEAGMPKVKDRMRRKPLLYRNSKRIFKRRTICTGYKELFFKVMLRNGEYARQMYMLLSAFTVLIFVSPIWLKVIALLVYTGVCRYILTLIFDKVMDAPFLIGTDKESDEYYRARKSCINILHYAFAACCFLAAAVSLLFT</sequence>
<dbReference type="EMBL" id="AF008220">
    <property type="protein sequence ID" value="AAC00278.1"/>
    <property type="molecule type" value="Genomic_DNA"/>
</dbReference>
<dbReference type="EMBL" id="AL009126">
    <property type="protein sequence ID" value="CAB14978.1"/>
    <property type="molecule type" value="Genomic_DNA"/>
</dbReference>
<dbReference type="PIR" id="D69993">
    <property type="entry name" value="D69993"/>
</dbReference>
<dbReference type="RefSeq" id="NP_390878.1">
    <property type="nucleotide sequence ID" value="NC_000964.3"/>
</dbReference>
<dbReference type="RefSeq" id="WP_003229232.1">
    <property type="nucleotide sequence ID" value="NZ_OZ025638.1"/>
</dbReference>
<dbReference type="FunCoup" id="O35029">
    <property type="interactions" value="107"/>
</dbReference>
<dbReference type="STRING" id="224308.BSU30000"/>
<dbReference type="PaxDb" id="224308-BSU30000"/>
<dbReference type="EnsemblBacteria" id="CAB14978">
    <property type="protein sequence ID" value="CAB14978"/>
    <property type="gene ID" value="BSU_30000"/>
</dbReference>
<dbReference type="GeneID" id="937288"/>
<dbReference type="KEGG" id="bsu:BSU30000"/>
<dbReference type="PATRIC" id="fig|224308.179.peg.3258"/>
<dbReference type="eggNOG" id="COG4473">
    <property type="taxonomic scope" value="Bacteria"/>
</dbReference>
<dbReference type="InParanoid" id="O35029"/>
<dbReference type="OrthoDB" id="2448479at2"/>
<dbReference type="BioCyc" id="BSUB:BSU30000-MONOMER"/>
<dbReference type="Proteomes" id="UP000001570">
    <property type="component" value="Chromosome"/>
</dbReference>
<dbReference type="GO" id="GO:0005886">
    <property type="term" value="C:plasma membrane"/>
    <property type="evidence" value="ECO:0007669"/>
    <property type="project" value="UniProtKB-SubCell"/>
</dbReference>
<dbReference type="InterPro" id="IPR010288">
    <property type="entry name" value="EcsB_ABC"/>
</dbReference>
<dbReference type="Pfam" id="PF05975">
    <property type="entry name" value="EcsB"/>
    <property type="match status" value="1"/>
</dbReference>
<dbReference type="PIRSF" id="PIRSF037259">
    <property type="entry name" value="EcsB_ABC"/>
    <property type="match status" value="1"/>
</dbReference>
<gene>
    <name type="primary">ythQ</name>
    <name type="ordered locus">BSU30000</name>
</gene>
<reference key="1">
    <citation type="journal article" date="1997" name="Microbiology">
        <title>Sequencing and functional annotation of the Bacillus subtilis genes in the 200 kb rrnB-dnaB region.</title>
        <authorList>
            <person name="Lapidus A."/>
            <person name="Galleron N."/>
            <person name="Sorokin A."/>
            <person name="Ehrlich S.D."/>
        </authorList>
    </citation>
    <scope>NUCLEOTIDE SEQUENCE [GENOMIC DNA]</scope>
    <source>
        <strain>168</strain>
    </source>
</reference>
<reference key="2">
    <citation type="journal article" date="1997" name="Nature">
        <title>The complete genome sequence of the Gram-positive bacterium Bacillus subtilis.</title>
        <authorList>
            <person name="Kunst F."/>
            <person name="Ogasawara N."/>
            <person name="Moszer I."/>
            <person name="Albertini A.M."/>
            <person name="Alloni G."/>
            <person name="Azevedo V."/>
            <person name="Bertero M.G."/>
            <person name="Bessieres P."/>
            <person name="Bolotin A."/>
            <person name="Borchert S."/>
            <person name="Borriss R."/>
            <person name="Boursier L."/>
            <person name="Brans A."/>
            <person name="Braun M."/>
            <person name="Brignell S.C."/>
            <person name="Bron S."/>
            <person name="Brouillet S."/>
            <person name="Bruschi C.V."/>
            <person name="Caldwell B."/>
            <person name="Capuano V."/>
            <person name="Carter N.M."/>
            <person name="Choi S.-K."/>
            <person name="Codani J.-J."/>
            <person name="Connerton I.F."/>
            <person name="Cummings N.J."/>
            <person name="Daniel R.A."/>
            <person name="Denizot F."/>
            <person name="Devine K.M."/>
            <person name="Duesterhoeft A."/>
            <person name="Ehrlich S.D."/>
            <person name="Emmerson P.T."/>
            <person name="Entian K.-D."/>
            <person name="Errington J."/>
            <person name="Fabret C."/>
            <person name="Ferrari E."/>
            <person name="Foulger D."/>
            <person name="Fritz C."/>
            <person name="Fujita M."/>
            <person name="Fujita Y."/>
            <person name="Fuma S."/>
            <person name="Galizzi A."/>
            <person name="Galleron N."/>
            <person name="Ghim S.-Y."/>
            <person name="Glaser P."/>
            <person name="Goffeau A."/>
            <person name="Golightly E.J."/>
            <person name="Grandi G."/>
            <person name="Guiseppi G."/>
            <person name="Guy B.J."/>
            <person name="Haga K."/>
            <person name="Haiech J."/>
            <person name="Harwood C.R."/>
            <person name="Henaut A."/>
            <person name="Hilbert H."/>
            <person name="Holsappel S."/>
            <person name="Hosono S."/>
            <person name="Hullo M.-F."/>
            <person name="Itaya M."/>
            <person name="Jones L.-M."/>
            <person name="Joris B."/>
            <person name="Karamata D."/>
            <person name="Kasahara Y."/>
            <person name="Klaerr-Blanchard M."/>
            <person name="Klein C."/>
            <person name="Kobayashi Y."/>
            <person name="Koetter P."/>
            <person name="Koningstein G."/>
            <person name="Krogh S."/>
            <person name="Kumano M."/>
            <person name="Kurita K."/>
            <person name="Lapidus A."/>
            <person name="Lardinois S."/>
            <person name="Lauber J."/>
            <person name="Lazarevic V."/>
            <person name="Lee S.-M."/>
            <person name="Levine A."/>
            <person name="Liu H."/>
            <person name="Masuda S."/>
            <person name="Mauel C."/>
            <person name="Medigue C."/>
            <person name="Medina N."/>
            <person name="Mellado R.P."/>
            <person name="Mizuno M."/>
            <person name="Moestl D."/>
            <person name="Nakai S."/>
            <person name="Noback M."/>
            <person name="Noone D."/>
            <person name="O'Reilly M."/>
            <person name="Ogawa K."/>
            <person name="Ogiwara A."/>
            <person name="Oudega B."/>
            <person name="Park S.-H."/>
            <person name="Parro V."/>
            <person name="Pohl T.M."/>
            <person name="Portetelle D."/>
            <person name="Porwollik S."/>
            <person name="Prescott A.M."/>
            <person name="Presecan E."/>
            <person name="Pujic P."/>
            <person name="Purnelle B."/>
            <person name="Rapoport G."/>
            <person name="Rey M."/>
            <person name="Reynolds S."/>
            <person name="Rieger M."/>
            <person name="Rivolta C."/>
            <person name="Rocha E."/>
            <person name="Roche B."/>
            <person name="Rose M."/>
            <person name="Sadaie Y."/>
            <person name="Sato T."/>
            <person name="Scanlan E."/>
            <person name="Schleich S."/>
            <person name="Schroeter R."/>
            <person name="Scoffone F."/>
            <person name="Sekiguchi J."/>
            <person name="Sekowska A."/>
            <person name="Seror S.J."/>
            <person name="Serror P."/>
            <person name="Shin B.-S."/>
            <person name="Soldo B."/>
            <person name="Sorokin A."/>
            <person name="Tacconi E."/>
            <person name="Takagi T."/>
            <person name="Takahashi H."/>
            <person name="Takemaru K."/>
            <person name="Takeuchi M."/>
            <person name="Tamakoshi A."/>
            <person name="Tanaka T."/>
            <person name="Terpstra P."/>
            <person name="Tognoni A."/>
            <person name="Tosato V."/>
            <person name="Uchiyama S."/>
            <person name="Vandenbol M."/>
            <person name="Vannier F."/>
            <person name="Vassarotti A."/>
            <person name="Viari A."/>
            <person name="Wambutt R."/>
            <person name="Wedler E."/>
            <person name="Wedler H."/>
            <person name="Weitzenegger T."/>
            <person name="Winters P."/>
            <person name="Wipat A."/>
            <person name="Yamamoto H."/>
            <person name="Yamane K."/>
            <person name="Yasumoto K."/>
            <person name="Yata K."/>
            <person name="Yoshida K."/>
            <person name="Yoshikawa H.-F."/>
            <person name="Zumstein E."/>
            <person name="Yoshikawa H."/>
            <person name="Danchin A."/>
        </authorList>
    </citation>
    <scope>NUCLEOTIDE SEQUENCE [LARGE SCALE GENOMIC DNA]</scope>
    <source>
        <strain>168</strain>
    </source>
</reference>
<keyword id="KW-1003">Cell membrane</keyword>
<keyword id="KW-0472">Membrane</keyword>
<keyword id="KW-1185">Reference proteome</keyword>
<keyword id="KW-0812">Transmembrane</keyword>
<keyword id="KW-1133">Transmembrane helix</keyword>
<feature type="chain" id="PRO_0000376846" description="Putative transporter YthQ">
    <location>
        <begin position="1"/>
        <end position="385"/>
    </location>
</feature>
<feature type="transmembrane region" description="Helical" evidence="1">
    <location>
        <begin position="24"/>
        <end position="44"/>
    </location>
</feature>
<feature type="transmembrane region" description="Helical" evidence="1">
    <location>
        <begin position="67"/>
        <end position="87"/>
    </location>
</feature>
<feature type="transmembrane region" description="Helical" evidence="1">
    <location>
        <begin position="106"/>
        <end position="128"/>
    </location>
</feature>
<feature type="transmembrane region" description="Helical" evidence="1">
    <location>
        <begin position="133"/>
        <end position="155"/>
    </location>
</feature>
<feature type="transmembrane region" description="Helical" evidence="1">
    <location>
        <begin position="176"/>
        <end position="193"/>
    </location>
</feature>
<feature type="transmembrane region" description="Helical" evidence="1">
    <location>
        <begin position="197"/>
        <end position="214"/>
    </location>
</feature>
<feature type="transmembrane region" description="Helical" evidence="1">
    <location>
        <begin position="304"/>
        <end position="324"/>
    </location>
</feature>
<feature type="transmembrane region" description="Helical" evidence="1">
    <location>
        <begin position="365"/>
        <end position="385"/>
    </location>
</feature>
<accession>O35029</accession>
<accession>Q795S1</accession>
<evidence type="ECO:0000255" key="1"/>
<evidence type="ECO:0000305" key="2"/>
<proteinExistence type="predicted"/>
<protein>
    <recommendedName>
        <fullName>Putative transporter YthQ</fullName>
    </recommendedName>
</protein>